<protein>
    <recommendedName>
        <fullName>Inhibin beta A chain</fullName>
    </recommendedName>
    <alternativeName>
        <fullName>Activin beta-A chain</fullName>
    </alternativeName>
</protein>
<comment type="function">
    <text evidence="2">Inhibins/activins are involved in regulating a number of diverse functions such as hypothalamic and pituitary hormone secretion, gonadal hormone secretion, germ cell development and maturation, erythroid differentiation, insulin secretion, nerve cell survival, embryonic axial development or bone growth, depending on their subunit composition.</text>
</comment>
<comment type="function">
    <text evidence="2">Activin A is a homodimer of INHBA that plays a role in several essential biological processes including embryonic development, stem cell maintenance and differentiation, haematopoiesis, cell proliferation and tissue fibrosis. Signals through type I (such as ACVR1B or ACVR1C) and type II receptors (such as ACVR2A, ACVR2B or BMPR2) which, upon ligand binding, phosphorylate SMAD2 and SMAD3 intracellular signaling mediators that form a complex with SMAD4, translocate to the nucleus and modulate gene expression. Can also activate alternative non-canonical intracellular signaling pathways including the p38 MAPK, extracellular signal-regulated kinases 1/2 (ERK1/2) and c-Jun N-terminal kinases (JNKs) to modulate cell migration and differentiation. Alternatively, promotes osteoblastic differentiation via ACVRL1-SMAD1/5/9 pathway. In addition, can engage the type I receptor ACVR1 to form an ACVR1-activin A-type II receptor non-signaling complex (NSC) that renders receptors unavailable for engagement with BMPs, hence resulting in an apparent inhibition of ACVR1-mediated BMP signaling.</text>
</comment>
<comment type="function">
    <text evidence="2">Inhibin A is a dimer of alpha/INHA and beta-A/INHBA that functions as a feedback regulator in the hypothalamic-pituitary-gonadal (HPG) axis. Inhibits the secretion of FSH from the anterior pituitary gland by acting on pituitary gonadotrope cells. Antagonizes activin A by binding to the proteoglycan, betaglycan, and forming a stable complex with and, thereby, sequestering type II activin receptors while excluding type I receptor.</text>
</comment>
<comment type="subunit">
    <text evidence="2">Dimeric, linked by one or more disulfide bonds. Inhibin A is a dimer of alpha/INHA and beta-A/INHBA. Activin A is a homodimer of beta-A/INHBA. Activin AB is a dimer of beta-A/INHBA and beta-B/INHBB. Interacts with FST and FSTL3; these interactions prevent activin A interaction to its type II receptor. Activin A interacts with ACVR2A. Activin A interacts with BMPR2. Inhibin A interacts with ACVR1; this interaction creates a non-signaling complex (NSC) that inhibits ACVR1-mediated BMP signaling. Inhibin A interacts with ACVR2A.</text>
</comment>
<comment type="subcellular location">
    <subcellularLocation>
        <location evidence="2">Secreted</location>
    </subcellularLocation>
</comment>
<comment type="similarity">
    <text evidence="5">Belongs to the TGF-beta family.</text>
</comment>
<organism>
    <name type="scientific">Ovis aries</name>
    <name type="common">Sheep</name>
    <dbReference type="NCBI Taxonomy" id="9940"/>
    <lineage>
        <taxon>Eukaryota</taxon>
        <taxon>Metazoa</taxon>
        <taxon>Chordata</taxon>
        <taxon>Craniata</taxon>
        <taxon>Vertebrata</taxon>
        <taxon>Euteleostomi</taxon>
        <taxon>Mammalia</taxon>
        <taxon>Eutheria</taxon>
        <taxon>Laurasiatheria</taxon>
        <taxon>Artiodactyla</taxon>
        <taxon>Ruminantia</taxon>
        <taxon>Pecora</taxon>
        <taxon>Bovidae</taxon>
        <taxon>Caprinae</taxon>
        <taxon>Ovis</taxon>
    </lineage>
</organism>
<reference key="1">
    <citation type="journal article" date="1995" name="Mol. Reprod. Dev.">
        <title>Tissue-specific variation in the length of the 5' untranslated region of the beta A-inhibin mRNA in sheep.</title>
        <authorList>
            <person name="Fleming J.S."/>
            <person name="Galloway S.M."/>
            <person name="Crawford R.J."/>
            <person name="Tisdall D.J."/>
            <person name="Greenwood P.J."/>
        </authorList>
    </citation>
    <scope>NUCLEOTIDE SEQUENCE [MRNA]</scope>
</reference>
<reference key="2">
    <citation type="journal article" date="1987" name="J. Endocrinol.">
        <title>Isolation of inhibin from ovine follicular fluid.</title>
        <authorList>
            <person name="Leversha L.J."/>
            <person name="Robertson D.M."/>
            <person name="de Vos F.L."/>
            <person name="Morgan F.J."/>
            <person name="Hearn M.T."/>
            <person name="Wettenhall R.E."/>
            <person name="Findlay J.K."/>
            <person name="Burger H.G."/>
            <person name="de Kretser D.M."/>
        </authorList>
    </citation>
    <scope>PROTEIN SEQUENCE OF 310-322</scope>
</reference>
<proteinExistence type="evidence at protein level"/>
<keyword id="KW-0165">Cleavage on pair of basic residues</keyword>
<keyword id="KW-0903">Direct protein sequencing</keyword>
<keyword id="KW-1015">Disulfide bond</keyword>
<keyword id="KW-0325">Glycoprotein</keyword>
<keyword id="KW-0339">Growth factor</keyword>
<keyword id="KW-0372">Hormone</keyword>
<keyword id="KW-1185">Reference proteome</keyword>
<keyword id="KW-0964">Secreted</keyword>
<keyword id="KW-0732">Signal</keyword>
<dbReference type="EMBL" id="L19218">
    <property type="protein sequence ID" value="AAC41621.1"/>
    <property type="molecule type" value="mRNA"/>
</dbReference>
<dbReference type="PIR" id="I47072">
    <property type="entry name" value="I47072"/>
</dbReference>
<dbReference type="RefSeq" id="NP_001009458.1">
    <property type="nucleotide sequence ID" value="NM_001009458.1"/>
</dbReference>
<dbReference type="SMR" id="P43032"/>
<dbReference type="STRING" id="9940.ENSOARP00000018756"/>
<dbReference type="GlyCosmos" id="P43032">
    <property type="glycosylation" value="1 site, No reported glycans"/>
</dbReference>
<dbReference type="PaxDb" id="9940-ENSOARP00000018756"/>
<dbReference type="GeneID" id="443524"/>
<dbReference type="KEGG" id="oas:443524"/>
<dbReference type="CTD" id="3624"/>
<dbReference type="eggNOG" id="KOG3900">
    <property type="taxonomic scope" value="Eukaryota"/>
</dbReference>
<dbReference type="OrthoDB" id="6516235at2759"/>
<dbReference type="Proteomes" id="UP000002356">
    <property type="component" value="Unplaced"/>
</dbReference>
<dbReference type="GO" id="GO:0043509">
    <property type="term" value="C:activin A complex"/>
    <property type="evidence" value="ECO:0000250"/>
    <property type="project" value="UniProtKB"/>
</dbReference>
<dbReference type="GO" id="GO:0005576">
    <property type="term" value="C:extracellular region"/>
    <property type="evidence" value="ECO:0000250"/>
    <property type="project" value="UniProtKB"/>
</dbReference>
<dbReference type="GO" id="GO:0043512">
    <property type="term" value="C:inhibin A complex"/>
    <property type="evidence" value="ECO:0000250"/>
    <property type="project" value="UniProtKB"/>
</dbReference>
<dbReference type="GO" id="GO:0005125">
    <property type="term" value="F:cytokine activity"/>
    <property type="evidence" value="ECO:0000250"/>
    <property type="project" value="UniProtKB"/>
</dbReference>
<dbReference type="GO" id="GO:0008083">
    <property type="term" value="F:growth factor activity"/>
    <property type="evidence" value="ECO:0007669"/>
    <property type="project" value="UniProtKB-KW"/>
</dbReference>
<dbReference type="GO" id="GO:0005179">
    <property type="term" value="F:hormone activity"/>
    <property type="evidence" value="ECO:0007669"/>
    <property type="project" value="UniProtKB-KW"/>
</dbReference>
<dbReference type="GO" id="GO:0032924">
    <property type="term" value="P:activin receptor signaling pathway"/>
    <property type="evidence" value="ECO:0000250"/>
    <property type="project" value="UniProtKB"/>
</dbReference>
<dbReference type="GO" id="GO:0061029">
    <property type="term" value="P:eyelid development in camera-type eye"/>
    <property type="evidence" value="ECO:0000250"/>
    <property type="project" value="UniProtKB"/>
</dbReference>
<dbReference type="GO" id="GO:0001942">
    <property type="term" value="P:hair follicle development"/>
    <property type="evidence" value="ECO:0000250"/>
    <property type="project" value="UniProtKB"/>
</dbReference>
<dbReference type="GO" id="GO:0002244">
    <property type="term" value="P:hematopoietic progenitor cell differentiation"/>
    <property type="evidence" value="ECO:0000250"/>
    <property type="project" value="UniProtKB"/>
</dbReference>
<dbReference type="GO" id="GO:0042541">
    <property type="term" value="P:hemoglobin biosynthetic process"/>
    <property type="evidence" value="ECO:0000250"/>
    <property type="project" value="UniProtKB"/>
</dbReference>
<dbReference type="GO" id="GO:0008584">
    <property type="term" value="P:male gonad development"/>
    <property type="evidence" value="ECO:0000250"/>
    <property type="project" value="UniProtKB"/>
</dbReference>
<dbReference type="GO" id="GO:0030308">
    <property type="term" value="P:negative regulation of cell growth"/>
    <property type="evidence" value="ECO:0000250"/>
    <property type="project" value="UniProtKB"/>
</dbReference>
<dbReference type="GO" id="GO:0008285">
    <property type="term" value="P:negative regulation of cell population proliferation"/>
    <property type="evidence" value="ECO:0000250"/>
    <property type="project" value="UniProtKB"/>
</dbReference>
<dbReference type="GO" id="GO:2000134">
    <property type="term" value="P:negative regulation of G1/S transition of mitotic cell cycle"/>
    <property type="evidence" value="ECO:0000250"/>
    <property type="project" value="UniProtKB"/>
</dbReference>
<dbReference type="GO" id="GO:0042476">
    <property type="term" value="P:odontogenesis"/>
    <property type="evidence" value="ECO:0000250"/>
    <property type="project" value="UniProtKB"/>
</dbReference>
<dbReference type="GO" id="GO:0001541">
    <property type="term" value="P:ovarian follicle development"/>
    <property type="evidence" value="ECO:0000250"/>
    <property type="project" value="UniProtKB"/>
</dbReference>
<dbReference type="GO" id="GO:0045893">
    <property type="term" value="P:positive regulation of DNA-templated transcription"/>
    <property type="evidence" value="ECO:0000250"/>
    <property type="project" value="UniProtKB"/>
</dbReference>
<dbReference type="GO" id="GO:0045648">
    <property type="term" value="P:positive regulation of erythrocyte differentiation"/>
    <property type="evidence" value="ECO:0000250"/>
    <property type="project" value="UniProtKB"/>
</dbReference>
<dbReference type="GO" id="GO:2001241">
    <property type="term" value="P:positive regulation of extrinsic apoptotic signaling pathway in absence of ligand"/>
    <property type="evidence" value="ECO:0000250"/>
    <property type="project" value="UniProtKB"/>
</dbReference>
<dbReference type="GO" id="GO:0060279">
    <property type="term" value="P:positive regulation of ovulation"/>
    <property type="evidence" value="ECO:0000250"/>
    <property type="project" value="UniProtKB"/>
</dbReference>
<dbReference type="GO" id="GO:0045944">
    <property type="term" value="P:positive regulation of transcription by RNA polymerase II"/>
    <property type="evidence" value="ECO:0000250"/>
    <property type="project" value="UniProtKB"/>
</dbReference>
<dbReference type="GO" id="GO:0042701">
    <property type="term" value="P:progesterone secretion"/>
    <property type="evidence" value="ECO:0000250"/>
    <property type="project" value="UniProtKB"/>
</dbReference>
<dbReference type="GO" id="GO:0046880">
    <property type="term" value="P:regulation of follicle-stimulating hormone secretion"/>
    <property type="evidence" value="ECO:0000250"/>
    <property type="project" value="UniProtKB"/>
</dbReference>
<dbReference type="GO" id="GO:0006357">
    <property type="term" value="P:regulation of transcription by RNA polymerase II"/>
    <property type="evidence" value="ECO:0000250"/>
    <property type="project" value="UniProtKB"/>
</dbReference>
<dbReference type="GO" id="GO:0060021">
    <property type="term" value="P:roof of mouth development"/>
    <property type="evidence" value="ECO:0000250"/>
    <property type="project" value="UniProtKB"/>
</dbReference>
<dbReference type="CDD" id="cd19404">
    <property type="entry name" value="TGF_beta_INHBA"/>
    <property type="match status" value="1"/>
</dbReference>
<dbReference type="FunFam" id="2.10.90.10:FF:000005">
    <property type="entry name" value="Inhibin beta A chain"/>
    <property type="match status" value="1"/>
</dbReference>
<dbReference type="FunFam" id="2.60.120.970:FF:000007">
    <property type="entry name" value="Inhibin beta A chain"/>
    <property type="match status" value="1"/>
</dbReference>
<dbReference type="Gene3D" id="2.60.120.970">
    <property type="match status" value="1"/>
</dbReference>
<dbReference type="Gene3D" id="2.10.90.10">
    <property type="entry name" value="Cystine-knot cytokines"/>
    <property type="match status" value="1"/>
</dbReference>
<dbReference type="InterPro" id="IPR029034">
    <property type="entry name" value="Cystine-knot_cytokine"/>
</dbReference>
<dbReference type="InterPro" id="IPR000491">
    <property type="entry name" value="Inhibin_betaA"/>
</dbReference>
<dbReference type="InterPro" id="IPR001839">
    <property type="entry name" value="TGF-b_C"/>
</dbReference>
<dbReference type="InterPro" id="IPR001111">
    <property type="entry name" value="TGF-b_propeptide"/>
</dbReference>
<dbReference type="InterPro" id="IPR015615">
    <property type="entry name" value="TGF-beta-rel"/>
</dbReference>
<dbReference type="InterPro" id="IPR017948">
    <property type="entry name" value="TGFb_CS"/>
</dbReference>
<dbReference type="PANTHER" id="PTHR11848:SF133">
    <property type="entry name" value="INHIBIN BETA A CHAIN"/>
    <property type="match status" value="1"/>
</dbReference>
<dbReference type="PANTHER" id="PTHR11848">
    <property type="entry name" value="TGF-BETA FAMILY"/>
    <property type="match status" value="1"/>
</dbReference>
<dbReference type="Pfam" id="PF00019">
    <property type="entry name" value="TGF_beta"/>
    <property type="match status" value="1"/>
</dbReference>
<dbReference type="Pfam" id="PF00688">
    <property type="entry name" value="TGFb_propeptide"/>
    <property type="match status" value="1"/>
</dbReference>
<dbReference type="PRINTS" id="PR00670">
    <property type="entry name" value="INHIBINBA"/>
</dbReference>
<dbReference type="SMART" id="SM00204">
    <property type="entry name" value="TGFB"/>
    <property type="match status" value="1"/>
</dbReference>
<dbReference type="SUPFAM" id="SSF57501">
    <property type="entry name" value="Cystine-knot cytokines"/>
    <property type="match status" value="1"/>
</dbReference>
<dbReference type="PROSITE" id="PS00250">
    <property type="entry name" value="TGF_BETA_1"/>
    <property type="match status" value="1"/>
</dbReference>
<dbReference type="PROSITE" id="PS51362">
    <property type="entry name" value="TGF_BETA_2"/>
    <property type="match status" value="1"/>
</dbReference>
<name>INHBA_SHEEP</name>
<feature type="signal peptide" evidence="1">
    <location>
        <begin position="1"/>
        <end position="20"/>
    </location>
</feature>
<feature type="propeptide" id="PRO_0000033716" evidence="3">
    <location>
        <begin position="21"/>
        <end position="309"/>
    </location>
</feature>
<feature type="chain" id="PRO_0000033717" description="Inhibin beta A chain">
    <location>
        <begin position="310"/>
        <end position="425"/>
    </location>
</feature>
<feature type="region of interest" description="Disordered" evidence="4">
    <location>
        <begin position="260"/>
        <end position="289"/>
    </location>
</feature>
<feature type="compositionally biased region" description="Basic and acidic residues" evidence="4">
    <location>
        <begin position="263"/>
        <end position="275"/>
    </location>
</feature>
<feature type="glycosylation site" description="N-linked (GlcNAc...) asparagine" evidence="3">
    <location>
        <position position="165"/>
    </location>
</feature>
<feature type="disulfide bond" evidence="1">
    <location>
        <begin position="313"/>
        <end position="321"/>
    </location>
</feature>
<feature type="disulfide bond" evidence="1">
    <location>
        <begin position="320"/>
        <end position="390"/>
    </location>
</feature>
<feature type="disulfide bond" evidence="1">
    <location>
        <begin position="349"/>
        <end position="422"/>
    </location>
</feature>
<feature type="disulfide bond" evidence="1">
    <location>
        <begin position="353"/>
        <end position="424"/>
    </location>
</feature>
<feature type="disulfide bond" description="Interchain" evidence="1">
    <location>
        <position position="389"/>
    </location>
</feature>
<evidence type="ECO:0000250" key="1"/>
<evidence type="ECO:0000250" key="2">
    <source>
        <dbReference type="UniProtKB" id="P08476"/>
    </source>
</evidence>
<evidence type="ECO:0000255" key="3"/>
<evidence type="ECO:0000256" key="4">
    <source>
        <dbReference type="SAM" id="MobiDB-lite"/>
    </source>
</evidence>
<evidence type="ECO:0000305" key="5"/>
<gene>
    <name type="primary">INHBA</name>
</gene>
<sequence>MPLLWLRGFLLASCWIIVRSSPTPGSEGHSAAPDCPSCALATLPKDVPNSQPEMVEAVKKHILNMLHLKKRPDVTQPVPKAALLNAIRKLHVGKVGENGYVEIEDDIGRRAEMNELMEQTSEIITFAESGTARKTLHFEISQEGSDLSVVERAEIWLFLKVPKANRTRSKVTIRLFQQQKHLQGSLDAGEEAEEVGLKGEKSEMLISEKVVDARKSTWHIFPVSSCIQRLLDQGKSSLDIRIACEQCQETGASLVLLGKKKRKEEEGEGKKRDGEGGAGGDEEKEQSHRPFLMLQARQSEDHPHRRRRRGLECDGKVNICCKKQFYVSFKDIGWNDWIIAPSGYHANYCEGECPSHIAGTSGSSLSFHSTVINHYRMRGHSPFANLKSCCVPTKLRPMSMLYYDDGQNIIKKDIQNMIVEECGCS</sequence>
<accession>P43032</accession>